<proteinExistence type="inferred from homology"/>
<evidence type="ECO:0000255" key="1">
    <source>
        <dbReference type="HAMAP-Rule" id="MF_01217"/>
    </source>
</evidence>
<evidence type="ECO:0000255" key="2">
    <source>
        <dbReference type="PROSITE-ProRule" id="PRU00258"/>
    </source>
</evidence>
<accession>B4T328</accession>
<gene>
    <name evidence="1" type="primary">acpP</name>
    <name type="ordered locus">SNSL254_A1295</name>
</gene>
<name>ACP_SALNS</name>
<protein>
    <recommendedName>
        <fullName evidence="1">Acyl carrier protein</fullName>
        <shortName evidence="1">ACP</shortName>
    </recommendedName>
</protein>
<reference key="1">
    <citation type="journal article" date="2011" name="J. Bacteriol.">
        <title>Comparative genomics of 28 Salmonella enterica isolates: evidence for CRISPR-mediated adaptive sublineage evolution.</title>
        <authorList>
            <person name="Fricke W.F."/>
            <person name="Mammel M.K."/>
            <person name="McDermott P.F."/>
            <person name="Tartera C."/>
            <person name="White D.G."/>
            <person name="Leclerc J.E."/>
            <person name="Ravel J."/>
            <person name="Cebula T.A."/>
        </authorList>
    </citation>
    <scope>NUCLEOTIDE SEQUENCE [LARGE SCALE GENOMIC DNA]</scope>
    <source>
        <strain>SL254</strain>
    </source>
</reference>
<organism>
    <name type="scientific">Salmonella newport (strain SL254)</name>
    <dbReference type="NCBI Taxonomy" id="423368"/>
    <lineage>
        <taxon>Bacteria</taxon>
        <taxon>Pseudomonadati</taxon>
        <taxon>Pseudomonadota</taxon>
        <taxon>Gammaproteobacteria</taxon>
        <taxon>Enterobacterales</taxon>
        <taxon>Enterobacteriaceae</taxon>
        <taxon>Salmonella</taxon>
    </lineage>
</organism>
<sequence length="78" mass="8640">MSTIEERVKKIIGEQLGVKQEEVTNNASFVEDLGADSLDTVELVMALEEEFDTEIPDEEAEKITTVQAAIDYINGHQA</sequence>
<feature type="chain" id="PRO_1000139065" description="Acyl carrier protein">
    <location>
        <begin position="1"/>
        <end position="78"/>
    </location>
</feature>
<feature type="domain" description="Carrier" evidence="2">
    <location>
        <begin position="2"/>
        <end position="77"/>
    </location>
</feature>
<feature type="modified residue" description="O-(pantetheine 4'-phosphoryl)serine" evidence="2">
    <location>
        <position position="37"/>
    </location>
</feature>
<keyword id="KW-0963">Cytoplasm</keyword>
<keyword id="KW-0275">Fatty acid biosynthesis</keyword>
<keyword id="KW-0276">Fatty acid metabolism</keyword>
<keyword id="KW-0444">Lipid biosynthesis</keyword>
<keyword id="KW-0443">Lipid metabolism</keyword>
<keyword id="KW-0596">Phosphopantetheine</keyword>
<keyword id="KW-0597">Phosphoprotein</keyword>
<comment type="function">
    <text evidence="1">Carrier of the growing fatty acid chain in fatty acid biosynthesis.</text>
</comment>
<comment type="pathway">
    <text evidence="1">Lipid metabolism; fatty acid biosynthesis.</text>
</comment>
<comment type="subcellular location">
    <subcellularLocation>
        <location evidence="1">Cytoplasm</location>
    </subcellularLocation>
</comment>
<comment type="PTM">
    <text evidence="1">4'-phosphopantetheine is transferred from CoA to a specific serine of apo-ACP by AcpS. This modification is essential for activity because fatty acids are bound in thioester linkage to the sulfhydryl of the prosthetic group.</text>
</comment>
<comment type="similarity">
    <text evidence="1">Belongs to the acyl carrier protein (ACP) family.</text>
</comment>
<dbReference type="EMBL" id="CP001113">
    <property type="protein sequence ID" value="ACF63654.1"/>
    <property type="molecule type" value="Genomic_DNA"/>
</dbReference>
<dbReference type="RefSeq" id="WP_000103754.1">
    <property type="nucleotide sequence ID" value="NZ_CCMR01000003.1"/>
</dbReference>
<dbReference type="SMR" id="B4T328"/>
<dbReference type="GeneID" id="98387866"/>
<dbReference type="KEGG" id="see:SNSL254_A1295"/>
<dbReference type="HOGENOM" id="CLU_108696_5_1_6"/>
<dbReference type="UniPathway" id="UPA00094"/>
<dbReference type="Proteomes" id="UP000008824">
    <property type="component" value="Chromosome"/>
</dbReference>
<dbReference type="GO" id="GO:0005829">
    <property type="term" value="C:cytosol"/>
    <property type="evidence" value="ECO:0007669"/>
    <property type="project" value="TreeGrafter"/>
</dbReference>
<dbReference type="GO" id="GO:0016020">
    <property type="term" value="C:membrane"/>
    <property type="evidence" value="ECO:0007669"/>
    <property type="project" value="GOC"/>
</dbReference>
<dbReference type="GO" id="GO:0000035">
    <property type="term" value="F:acyl binding"/>
    <property type="evidence" value="ECO:0007669"/>
    <property type="project" value="TreeGrafter"/>
</dbReference>
<dbReference type="GO" id="GO:0000036">
    <property type="term" value="F:acyl carrier activity"/>
    <property type="evidence" value="ECO:0007669"/>
    <property type="project" value="UniProtKB-UniRule"/>
</dbReference>
<dbReference type="GO" id="GO:0009245">
    <property type="term" value="P:lipid A biosynthetic process"/>
    <property type="evidence" value="ECO:0007669"/>
    <property type="project" value="TreeGrafter"/>
</dbReference>
<dbReference type="FunFam" id="1.10.1200.10:FF:000001">
    <property type="entry name" value="Acyl carrier protein"/>
    <property type="match status" value="1"/>
</dbReference>
<dbReference type="Gene3D" id="1.10.1200.10">
    <property type="entry name" value="ACP-like"/>
    <property type="match status" value="1"/>
</dbReference>
<dbReference type="HAMAP" id="MF_01217">
    <property type="entry name" value="Acyl_carrier"/>
    <property type="match status" value="1"/>
</dbReference>
<dbReference type="InterPro" id="IPR003231">
    <property type="entry name" value="ACP"/>
</dbReference>
<dbReference type="InterPro" id="IPR036736">
    <property type="entry name" value="ACP-like_sf"/>
</dbReference>
<dbReference type="InterPro" id="IPR009081">
    <property type="entry name" value="PP-bd_ACP"/>
</dbReference>
<dbReference type="InterPro" id="IPR006162">
    <property type="entry name" value="Ppantetheine_attach_site"/>
</dbReference>
<dbReference type="NCBIfam" id="TIGR00517">
    <property type="entry name" value="acyl_carrier"/>
    <property type="match status" value="1"/>
</dbReference>
<dbReference type="NCBIfam" id="NF002148">
    <property type="entry name" value="PRK00982.1-2"/>
    <property type="match status" value="1"/>
</dbReference>
<dbReference type="NCBIfam" id="NF002149">
    <property type="entry name" value="PRK00982.1-3"/>
    <property type="match status" value="1"/>
</dbReference>
<dbReference type="NCBIfam" id="NF002150">
    <property type="entry name" value="PRK00982.1-4"/>
    <property type="match status" value="1"/>
</dbReference>
<dbReference type="NCBIfam" id="NF002151">
    <property type="entry name" value="PRK00982.1-5"/>
    <property type="match status" value="1"/>
</dbReference>
<dbReference type="PANTHER" id="PTHR20863">
    <property type="entry name" value="ACYL CARRIER PROTEIN"/>
    <property type="match status" value="1"/>
</dbReference>
<dbReference type="PANTHER" id="PTHR20863:SF76">
    <property type="entry name" value="CARRIER DOMAIN-CONTAINING PROTEIN"/>
    <property type="match status" value="1"/>
</dbReference>
<dbReference type="Pfam" id="PF00550">
    <property type="entry name" value="PP-binding"/>
    <property type="match status" value="1"/>
</dbReference>
<dbReference type="SUPFAM" id="SSF47336">
    <property type="entry name" value="ACP-like"/>
    <property type="match status" value="1"/>
</dbReference>
<dbReference type="PROSITE" id="PS50075">
    <property type="entry name" value="CARRIER"/>
    <property type="match status" value="1"/>
</dbReference>
<dbReference type="PROSITE" id="PS00012">
    <property type="entry name" value="PHOSPHOPANTETHEINE"/>
    <property type="match status" value="1"/>
</dbReference>